<gene>
    <name type="primary">Prp4k</name>
    <name type="synonym">Cbp143</name>
    <name type="synonym">Prp4h</name>
    <name type="synonym">Prp4m</name>
    <name type="synonym">Prpf4b</name>
    <name type="synonym">Prpk</name>
</gene>
<sequence>MAATEPPSLREQAEMDDADNSEKSVNEENGEVSEDQSQNKHSRHKKKKHKHRSKHKKHKHSSEEDRDKKHKHKHKHKKHKRKEVIEASDKEGLSPAKRTKLDDLALLEDLEKQRALIKAELDNELMEGKVQSGMGLILQGYESGSEEEGEIHEKARNGNRSSTRSSSTRGKLEITDNKNSAKKRSKSRSKERTRHRSDKRKSKGAGEMLREKANRSKSKERRKSKSPSKRSKSQDQARKSKSPPLRRRSQEKVGKARSPAEEKMKSEEKGKIKDRKKSPIVNERSRDRSKKSKSPVDLRDKSKDRRSRSKERKSKRSEIDKEKKPIKSPSKDASSGKENRSPSRRPGRSPKRRSLSPKLRDKSRRSRSPLLNDRRSKQSKSPSRTLSPGRRAKSRSLERKRREPERRRLSSPRTRPRDDILGRCERSKDASPINRWSPTRRRSRSPIRRRSRSPLRRSRSPRRRSRSPRRRDRSRRSRSRLRRRSRSRGGHRRRSRSKVKEDKFKGSLSEGMKVEQESSSDDNLEDFDVEEEDEEALIEQRRIQRQAIVQKYKYLAEDSNISVPSEPSSPQSSTRSRSPSPDDILERVAADVKEYERENVDTFEASVKAKHNLMTVEQNNGSSQKKILAPDMFTESDDMFAAYFDSARLRAAGIGKDFKENPNLRDNWTDAEGYYRVNIGEVLDKRYNVYGYTGQGVFSNVVRARDNARANQEVAVKIIRNNELMQKTGLKELEFLKKLNDADPDDKFHCLRLFRHFYHKQHLCLVFEPLSMNLREVLKKYGKDVGLHIKAVRSYSQQLFLALKLLKRCNILHADIKPDNILVNESKTILKLCDFGSASHVADNDITPYLVSRFYRAPEIIIGKSYDYGIDMWSVGCTLYELYTGKILFPGKTNNHMLKLAMDLKGKMPNKMIRKGVFKDQHFDQNLNFMYIEVDKVTEREKVTVMSTINPTKDLLADLIGCQRLPEDQRKKVHQLKDLLDQILMLDPAKRISINQALQHAFIQEKI</sequence>
<dbReference type="EC" id="2.7.11.1"/>
<dbReference type="EMBL" id="AF283466">
    <property type="protein sequence ID" value="AAM19102.1"/>
    <property type="molecule type" value="mRNA"/>
</dbReference>
<dbReference type="EMBL" id="AK020579">
    <property type="protein sequence ID" value="BAB32137.3"/>
    <property type="molecule type" value="mRNA"/>
</dbReference>
<dbReference type="EMBL" id="AK021274">
    <property type="protein sequence ID" value="BAB32358.3"/>
    <property type="molecule type" value="mRNA"/>
</dbReference>
<dbReference type="EMBL" id="AK083926">
    <property type="protein sequence ID" value="BAC39069.1"/>
    <property type="molecule type" value="mRNA"/>
</dbReference>
<dbReference type="EMBL" id="CH466546">
    <property type="protein sequence ID" value="EDL40895.1"/>
    <property type="molecule type" value="Genomic_DNA"/>
</dbReference>
<dbReference type="EMBL" id="BC141272">
    <property type="protein sequence ID" value="AAI41273.1"/>
    <property type="molecule type" value="mRNA"/>
</dbReference>
<dbReference type="EMBL" id="BC141273">
    <property type="protein sequence ID" value="AAI41274.1"/>
    <property type="molecule type" value="mRNA"/>
</dbReference>
<dbReference type="EMBL" id="AF033663">
    <property type="protein sequence ID" value="AAC32042.1"/>
    <property type="molecule type" value="mRNA"/>
</dbReference>
<dbReference type="EMBL" id="U48737">
    <property type="protein sequence ID" value="AAB03269.1"/>
    <property type="molecule type" value="mRNA"/>
</dbReference>
<dbReference type="CCDS" id="CCDS26448.1"/>
<dbReference type="RefSeq" id="NP_038858.2">
    <property type="nucleotide sequence ID" value="NM_013830.2"/>
</dbReference>
<dbReference type="RefSeq" id="XP_017170914.1">
    <property type="nucleotide sequence ID" value="XM_017315425.1"/>
</dbReference>
<dbReference type="RefSeq" id="XP_017170915.1">
    <property type="nucleotide sequence ID" value="XM_017315426.1"/>
</dbReference>
<dbReference type="RefSeq" id="XP_017170916.1">
    <property type="nucleotide sequence ID" value="XM_017315427.1"/>
</dbReference>
<dbReference type="RefSeq" id="XP_017170917.1">
    <property type="nucleotide sequence ID" value="XM_017315428.1"/>
</dbReference>
<dbReference type="RefSeq" id="XP_017170918.1">
    <property type="nucleotide sequence ID" value="XM_017315429.1"/>
</dbReference>
<dbReference type="RefSeq" id="XP_017170919.1">
    <property type="nucleotide sequence ID" value="XM_017315430.1"/>
</dbReference>
<dbReference type="RefSeq" id="XP_017170920.1">
    <property type="nucleotide sequence ID" value="XM_017315431.1"/>
</dbReference>
<dbReference type="RefSeq" id="XP_017170921.1">
    <property type="nucleotide sequence ID" value="XM_017315432.1"/>
</dbReference>
<dbReference type="RefSeq" id="XP_017170922.1">
    <property type="nucleotide sequence ID" value="XM_017315433.1"/>
</dbReference>
<dbReference type="RefSeq" id="XP_017170923.1">
    <property type="nucleotide sequence ID" value="XM_017315434.1"/>
</dbReference>
<dbReference type="RefSeq" id="XP_017170924.1">
    <property type="nucleotide sequence ID" value="XM_017315435.1"/>
</dbReference>
<dbReference type="RefSeq" id="XP_017170925.1">
    <property type="nucleotide sequence ID" value="XM_017315436.1"/>
</dbReference>
<dbReference type="RefSeq" id="XP_017170926.1">
    <property type="nucleotide sequence ID" value="XM_017315437.1"/>
</dbReference>
<dbReference type="SMR" id="Q61136"/>
<dbReference type="BioGRID" id="202400">
    <property type="interactions" value="33"/>
</dbReference>
<dbReference type="FunCoup" id="Q61136">
    <property type="interactions" value="5662"/>
</dbReference>
<dbReference type="IntAct" id="Q61136">
    <property type="interactions" value="2"/>
</dbReference>
<dbReference type="MINT" id="Q61136"/>
<dbReference type="STRING" id="10090.ENSMUSP00000077019"/>
<dbReference type="GlyGen" id="Q61136">
    <property type="glycosylation" value="1 site, 1 O-linked glycan (1 site)"/>
</dbReference>
<dbReference type="iPTMnet" id="Q61136"/>
<dbReference type="PhosphoSitePlus" id="Q61136"/>
<dbReference type="jPOST" id="Q61136"/>
<dbReference type="PaxDb" id="10090-ENSMUSP00000077019"/>
<dbReference type="ProteomicsDB" id="291666"/>
<dbReference type="Pumba" id="Q61136"/>
<dbReference type="Antibodypedia" id="9532">
    <property type="antibodies" value="163 antibodies from 27 providers"/>
</dbReference>
<dbReference type="DNASU" id="19134"/>
<dbReference type="Ensembl" id="ENSMUST00000077853.5">
    <property type="protein sequence ID" value="ENSMUSP00000077019.4"/>
    <property type="gene ID" value="ENSMUSG00000021413.10"/>
</dbReference>
<dbReference type="Ensembl" id="ENSMUST00000222509.2">
    <property type="protein sequence ID" value="ENSMUSP00000152654.2"/>
    <property type="gene ID" value="ENSMUSG00000021413.10"/>
</dbReference>
<dbReference type="GeneID" id="19134"/>
<dbReference type="KEGG" id="mmu:19134"/>
<dbReference type="UCSC" id="uc007qbp.2">
    <property type="organism name" value="mouse"/>
</dbReference>
<dbReference type="AGR" id="MGI:109584"/>
<dbReference type="CTD" id="19134"/>
<dbReference type="MGI" id="MGI:109584">
    <property type="gene designation" value="Prpf4b"/>
</dbReference>
<dbReference type="VEuPathDB" id="HostDB:ENSMUSG00000021413"/>
<dbReference type="eggNOG" id="KOG0670">
    <property type="taxonomic scope" value="Eukaryota"/>
</dbReference>
<dbReference type="GeneTree" id="ENSGT00940000155562"/>
<dbReference type="HOGENOM" id="CLU_000288_5_3_1"/>
<dbReference type="InParanoid" id="Q61136"/>
<dbReference type="OMA" id="MNRGDNA"/>
<dbReference type="OrthoDB" id="3967at2759"/>
<dbReference type="PhylomeDB" id="Q61136"/>
<dbReference type="TreeFam" id="TF315246"/>
<dbReference type="BRENDA" id="2.7.11.1">
    <property type="organism ID" value="3474"/>
</dbReference>
<dbReference type="Reactome" id="R-MMU-72163">
    <property type="pathway name" value="mRNA Splicing - Major Pathway"/>
</dbReference>
<dbReference type="BioGRID-ORCS" id="19134">
    <property type="hits" value="13 hits in 82 CRISPR screens"/>
</dbReference>
<dbReference type="ChiTaRS" id="Prpf4b">
    <property type="organism name" value="mouse"/>
</dbReference>
<dbReference type="PRO" id="PR:Q61136"/>
<dbReference type="Proteomes" id="UP000000589">
    <property type="component" value="Chromosome 13"/>
</dbReference>
<dbReference type="RNAct" id="Q61136">
    <property type="molecule type" value="protein"/>
</dbReference>
<dbReference type="Bgee" id="ENSMUSG00000021413">
    <property type="expression patterns" value="Expressed in bone fossa and 262 other cell types or tissues"/>
</dbReference>
<dbReference type="ExpressionAtlas" id="Q61136">
    <property type="expression patterns" value="baseline and differential"/>
</dbReference>
<dbReference type="GO" id="GO:0071013">
    <property type="term" value="C:catalytic step 2 spliceosome"/>
    <property type="evidence" value="ECO:0007669"/>
    <property type="project" value="Ensembl"/>
</dbReference>
<dbReference type="GO" id="GO:0005694">
    <property type="term" value="C:chromosome"/>
    <property type="evidence" value="ECO:0000314"/>
    <property type="project" value="MGI"/>
</dbReference>
<dbReference type="GO" id="GO:0000776">
    <property type="term" value="C:kinetochore"/>
    <property type="evidence" value="ECO:0000250"/>
    <property type="project" value="UniProtKB"/>
</dbReference>
<dbReference type="GO" id="GO:0016607">
    <property type="term" value="C:nuclear speck"/>
    <property type="evidence" value="ECO:0000250"/>
    <property type="project" value="UniProtKB"/>
</dbReference>
<dbReference type="GO" id="GO:0005524">
    <property type="term" value="F:ATP binding"/>
    <property type="evidence" value="ECO:0007669"/>
    <property type="project" value="UniProtKB-KW"/>
</dbReference>
<dbReference type="GO" id="GO:0004672">
    <property type="term" value="F:protein kinase activity"/>
    <property type="evidence" value="ECO:0000250"/>
    <property type="project" value="MGI"/>
</dbReference>
<dbReference type="GO" id="GO:0106310">
    <property type="term" value="F:protein serine kinase activity"/>
    <property type="evidence" value="ECO:0007669"/>
    <property type="project" value="RHEA"/>
</dbReference>
<dbReference type="GO" id="GO:0004674">
    <property type="term" value="F:protein serine/threonine kinase activity"/>
    <property type="evidence" value="ECO:0000250"/>
    <property type="project" value="UniProtKB"/>
</dbReference>
<dbReference type="GO" id="GO:0045292">
    <property type="term" value="P:mRNA cis splicing, via spliceosome"/>
    <property type="evidence" value="ECO:0007669"/>
    <property type="project" value="InterPro"/>
</dbReference>
<dbReference type="GO" id="GO:0035332">
    <property type="term" value="P:positive regulation of hippo signaling"/>
    <property type="evidence" value="ECO:0007669"/>
    <property type="project" value="Ensembl"/>
</dbReference>
<dbReference type="GO" id="GO:0046827">
    <property type="term" value="P:positive regulation of protein export from nucleus"/>
    <property type="evidence" value="ECO:0007669"/>
    <property type="project" value="Ensembl"/>
</dbReference>
<dbReference type="GO" id="GO:0090266">
    <property type="term" value="P:regulation of mitotic cell cycle spindle assembly checkpoint"/>
    <property type="evidence" value="ECO:0000250"/>
    <property type="project" value="UniProtKB"/>
</dbReference>
<dbReference type="GO" id="GO:0000387">
    <property type="term" value="P:spliceosomal snRNP assembly"/>
    <property type="evidence" value="ECO:0000250"/>
    <property type="project" value="UniProtKB"/>
</dbReference>
<dbReference type="GO" id="GO:0000244">
    <property type="term" value="P:spliceosomal tri-snRNP complex assembly"/>
    <property type="evidence" value="ECO:0000250"/>
    <property type="project" value="UniProtKB"/>
</dbReference>
<dbReference type="CDD" id="cd14135">
    <property type="entry name" value="STKc_PRP4"/>
    <property type="match status" value="1"/>
</dbReference>
<dbReference type="FunFam" id="1.10.510.10:FF:000078">
    <property type="entry name" value="Serine/threonine-protein kinase PRP4 homolog"/>
    <property type="match status" value="1"/>
</dbReference>
<dbReference type="FunFam" id="3.30.200.20:FF:000123">
    <property type="entry name" value="serine/threonine-protein kinase PRP4 homolog"/>
    <property type="match status" value="1"/>
</dbReference>
<dbReference type="Gene3D" id="3.30.200.20">
    <property type="entry name" value="Phosphorylase Kinase, domain 1"/>
    <property type="match status" value="1"/>
</dbReference>
<dbReference type="Gene3D" id="1.10.510.10">
    <property type="entry name" value="Transferase(Phosphotransferase) domain 1"/>
    <property type="match status" value="1"/>
</dbReference>
<dbReference type="InterPro" id="IPR011009">
    <property type="entry name" value="Kinase-like_dom_sf"/>
</dbReference>
<dbReference type="InterPro" id="IPR000719">
    <property type="entry name" value="Prot_kinase_dom"/>
</dbReference>
<dbReference type="InterPro" id="IPR008271">
    <property type="entry name" value="Ser/Thr_kinase_AS"/>
</dbReference>
<dbReference type="InterPro" id="IPR050494">
    <property type="entry name" value="Ser_Thr_dual-spec_kinase"/>
</dbReference>
<dbReference type="InterPro" id="IPR044092">
    <property type="entry name" value="STKc_PRP4"/>
</dbReference>
<dbReference type="PANTHER" id="PTHR24058">
    <property type="entry name" value="DUAL SPECIFICITY PROTEIN KINASE"/>
    <property type="match status" value="1"/>
</dbReference>
<dbReference type="PANTHER" id="PTHR24058:SF103">
    <property type="entry name" value="SERINE_THREONINE-PROTEIN KINASE PRP4 HOMOLOG"/>
    <property type="match status" value="1"/>
</dbReference>
<dbReference type="Pfam" id="PF00069">
    <property type="entry name" value="Pkinase"/>
    <property type="match status" value="1"/>
</dbReference>
<dbReference type="SMART" id="SM00220">
    <property type="entry name" value="S_TKc"/>
    <property type="match status" value="1"/>
</dbReference>
<dbReference type="SUPFAM" id="SSF56112">
    <property type="entry name" value="Protein kinase-like (PK-like)"/>
    <property type="match status" value="1"/>
</dbReference>
<dbReference type="PROSITE" id="PS50011">
    <property type="entry name" value="PROTEIN_KINASE_DOM"/>
    <property type="match status" value="1"/>
</dbReference>
<dbReference type="PROSITE" id="PS00108">
    <property type="entry name" value="PROTEIN_KINASE_ST"/>
    <property type="match status" value="1"/>
</dbReference>
<comment type="function">
    <text evidence="1">Serine/threonine kinase involved in spliceosomal assembly as well as mitosis and signaling regulation. Connects chromatin mediated regulation of transcription and pre-mRNA splicing. During spliceosomal assembly, interacts with and phosphorylates PRPF6 and PRPF31, components of the U4/U6-U5 tri-small nuclear ribonucleoprotein (snRNP), to facilitate the formation of the spliceosome B complex. Plays a role in regulating transcription and the spindle assembly checkpoint (SAC). Associates with U5 snRNP and NCOR1 deacetylase complexes which may allow a coordination of pre-mRNA splicing with chromatin remodeling events involved in transcriptional regulation. Associates and probably phosphorylates SMARCA4 and NCOR1. Phosphorylates SRSF1. Associates with kinetochores during mitosis and is necessary for recruitment and maintenance of the checkpoint proteins such as MAD1L1 and MAD12L1 at the kinetochores. Phosphorylates and regulates the activity of the transcription factors such as ELK1 and KLF13. Phosphorylates nuclear YAP1 and WWTR1/TAZ which induces nuclear exclusion and regulates Hippo signaling pathway, involved in tissue growth control.</text>
</comment>
<comment type="catalytic activity">
    <reaction evidence="1">
        <text>L-seryl-[protein] + ATP = O-phospho-L-seryl-[protein] + ADP + H(+)</text>
        <dbReference type="Rhea" id="RHEA:17989"/>
        <dbReference type="Rhea" id="RHEA-COMP:9863"/>
        <dbReference type="Rhea" id="RHEA-COMP:11604"/>
        <dbReference type="ChEBI" id="CHEBI:15378"/>
        <dbReference type="ChEBI" id="CHEBI:29999"/>
        <dbReference type="ChEBI" id="CHEBI:30616"/>
        <dbReference type="ChEBI" id="CHEBI:83421"/>
        <dbReference type="ChEBI" id="CHEBI:456216"/>
        <dbReference type="EC" id="2.7.11.1"/>
    </reaction>
    <physiologicalReaction direction="left-to-right" evidence="1">
        <dbReference type="Rhea" id="RHEA:17990"/>
    </physiologicalReaction>
</comment>
<comment type="catalytic activity">
    <reaction evidence="1">
        <text>L-threonyl-[protein] + ATP = O-phospho-L-threonyl-[protein] + ADP + H(+)</text>
        <dbReference type="Rhea" id="RHEA:46608"/>
        <dbReference type="Rhea" id="RHEA-COMP:11060"/>
        <dbReference type="Rhea" id="RHEA-COMP:11605"/>
        <dbReference type="ChEBI" id="CHEBI:15378"/>
        <dbReference type="ChEBI" id="CHEBI:30013"/>
        <dbReference type="ChEBI" id="CHEBI:30616"/>
        <dbReference type="ChEBI" id="CHEBI:61977"/>
        <dbReference type="ChEBI" id="CHEBI:456216"/>
        <dbReference type="EC" id="2.7.11.1"/>
    </reaction>
    <physiologicalReaction direction="left-to-right" evidence="1">
        <dbReference type="Rhea" id="RHEA:46609"/>
    </physiologicalReaction>
</comment>
<comment type="subunit">
    <text evidence="1">Interacts with CLK1 C-terminus. Associates with the U5 snRNP and NCOR1 deacetylase complexes. Identified in the spliceosome C complex.</text>
</comment>
<comment type="subcellular location">
    <subcellularLocation>
        <location evidence="6">Nucleus</location>
    </subcellularLocation>
    <subcellularLocation>
        <location evidence="1">Chromosome</location>
        <location evidence="1">Centromere</location>
        <location evidence="1">Kinetochore</location>
    </subcellularLocation>
    <text evidence="6">Located throughout the nucleus, excluding the nucleolus but enriched in multiple speckles.</text>
</comment>
<comment type="PTM">
    <text evidence="1">Phosphorylated by CLK1. Autophosphorylated; phosphorylation inhibits interaction with its targets, such as PRPF6 or SMARCA4.</text>
</comment>
<comment type="similarity">
    <text evidence="7">Belongs to the protein kinase superfamily. CMGC Ser/Thr protein kinase family.</text>
</comment>
<accession>Q61136</accession>
<accession>B2RUN6</accession>
<accession>O88378</accession>
<accession>Q8BND8</accession>
<accession>Q8R4Y5</accession>
<accession>Q9CTL9</accession>
<accession>Q9CTT0</accession>
<keyword id="KW-0007">Acetylation</keyword>
<keyword id="KW-0067">ATP-binding</keyword>
<keyword id="KW-0137">Centromere</keyword>
<keyword id="KW-0158">Chromosome</keyword>
<keyword id="KW-1017">Isopeptide bond</keyword>
<keyword id="KW-0418">Kinase</keyword>
<keyword id="KW-0995">Kinetochore</keyword>
<keyword id="KW-0507">mRNA processing</keyword>
<keyword id="KW-0508">mRNA splicing</keyword>
<keyword id="KW-0547">Nucleotide-binding</keyword>
<keyword id="KW-0539">Nucleus</keyword>
<keyword id="KW-0597">Phosphoprotein</keyword>
<keyword id="KW-1185">Reference proteome</keyword>
<keyword id="KW-0723">Serine/threonine-protein kinase</keyword>
<keyword id="KW-0747">Spliceosome</keyword>
<keyword id="KW-0808">Transferase</keyword>
<keyword id="KW-0832">Ubl conjugation</keyword>
<organism>
    <name type="scientific">Mus musculus</name>
    <name type="common">Mouse</name>
    <dbReference type="NCBI Taxonomy" id="10090"/>
    <lineage>
        <taxon>Eukaryota</taxon>
        <taxon>Metazoa</taxon>
        <taxon>Chordata</taxon>
        <taxon>Craniata</taxon>
        <taxon>Vertebrata</taxon>
        <taxon>Euteleostomi</taxon>
        <taxon>Mammalia</taxon>
        <taxon>Eutheria</taxon>
        <taxon>Euarchontoglires</taxon>
        <taxon>Glires</taxon>
        <taxon>Rodentia</taxon>
        <taxon>Myomorpha</taxon>
        <taxon>Muroidea</taxon>
        <taxon>Muridae</taxon>
        <taxon>Murinae</taxon>
        <taxon>Mus</taxon>
        <taxon>Mus</taxon>
    </lineage>
</organism>
<feature type="initiator methionine" description="Removed" evidence="1">
    <location>
        <position position="1"/>
    </location>
</feature>
<feature type="chain" id="PRO_0000086587" description="Serine/threonine-protein kinase PRP4 homolog">
    <location>
        <begin position="2"/>
        <end position="1007"/>
    </location>
</feature>
<feature type="domain" description="Protein kinase" evidence="3">
    <location>
        <begin position="687"/>
        <end position="1006"/>
    </location>
</feature>
<feature type="region of interest" description="Disordered" evidence="5">
    <location>
        <begin position="1"/>
        <end position="102"/>
    </location>
</feature>
<feature type="region of interest" description="Disordered" evidence="5">
    <location>
        <begin position="141"/>
        <end position="535"/>
    </location>
</feature>
<feature type="region of interest" description="Disordered" evidence="5">
    <location>
        <begin position="560"/>
        <end position="583"/>
    </location>
</feature>
<feature type="compositionally biased region" description="Basic residues" evidence="5">
    <location>
        <begin position="40"/>
        <end position="60"/>
    </location>
</feature>
<feature type="compositionally biased region" description="Basic residues" evidence="5">
    <location>
        <begin position="68"/>
        <end position="82"/>
    </location>
</feature>
<feature type="compositionally biased region" description="Basic and acidic residues" evidence="5">
    <location>
        <begin position="83"/>
        <end position="92"/>
    </location>
</feature>
<feature type="compositionally biased region" description="Low complexity" evidence="5">
    <location>
        <begin position="158"/>
        <end position="169"/>
    </location>
</feature>
<feature type="compositionally biased region" description="Basic residues" evidence="5">
    <location>
        <begin position="180"/>
        <end position="203"/>
    </location>
</feature>
<feature type="compositionally biased region" description="Basic residues" evidence="5">
    <location>
        <begin position="215"/>
        <end position="231"/>
    </location>
</feature>
<feature type="compositionally biased region" description="Basic and acidic residues" evidence="5">
    <location>
        <begin position="248"/>
        <end position="271"/>
    </location>
</feature>
<feature type="compositionally biased region" description="Basic and acidic residues" evidence="5">
    <location>
        <begin position="294"/>
        <end position="303"/>
    </location>
</feature>
<feature type="compositionally biased region" description="Basic residues" evidence="5">
    <location>
        <begin position="304"/>
        <end position="315"/>
    </location>
</feature>
<feature type="compositionally biased region" description="Basic and acidic residues" evidence="5">
    <location>
        <begin position="316"/>
        <end position="325"/>
    </location>
</feature>
<feature type="compositionally biased region" description="Basic residues" evidence="5">
    <location>
        <begin position="342"/>
        <end position="367"/>
    </location>
</feature>
<feature type="compositionally biased region" description="Basic and acidic residues" evidence="5">
    <location>
        <begin position="395"/>
        <end position="408"/>
    </location>
</feature>
<feature type="compositionally biased region" description="Basic and acidic residues" evidence="5">
    <location>
        <begin position="415"/>
        <end position="429"/>
    </location>
</feature>
<feature type="compositionally biased region" description="Basic residues" evidence="5">
    <location>
        <begin position="438"/>
        <end position="497"/>
    </location>
</feature>
<feature type="compositionally biased region" description="Acidic residues" evidence="5">
    <location>
        <begin position="518"/>
        <end position="535"/>
    </location>
</feature>
<feature type="compositionally biased region" description="Low complexity" evidence="5">
    <location>
        <begin position="562"/>
        <end position="581"/>
    </location>
</feature>
<feature type="active site" description="Proton acceptor" evidence="3 4">
    <location>
        <position position="815"/>
    </location>
</feature>
<feature type="binding site" evidence="3">
    <location>
        <begin position="693"/>
        <end position="701"/>
    </location>
    <ligand>
        <name>ATP</name>
        <dbReference type="ChEBI" id="CHEBI:30616"/>
    </ligand>
</feature>
<feature type="binding site" evidence="3">
    <location>
        <position position="717"/>
    </location>
    <ligand>
        <name>ATP</name>
        <dbReference type="ChEBI" id="CHEBI:30616"/>
    </ligand>
</feature>
<feature type="modified residue" description="N-acetylalanine" evidence="1">
    <location>
        <position position="2"/>
    </location>
</feature>
<feature type="modified residue" description="Phosphoserine" evidence="2">
    <location>
        <position position="8"/>
    </location>
</feature>
<feature type="modified residue" description="Phosphoserine" evidence="11">
    <location>
        <position position="21"/>
    </location>
</feature>
<feature type="modified residue" description="Phosphoserine" evidence="11">
    <location>
        <position position="24"/>
    </location>
</feature>
<feature type="modified residue" description="Phosphoserine" evidence="11">
    <location>
        <position position="33"/>
    </location>
</feature>
<feature type="modified residue" description="Phosphoserine" evidence="10 11">
    <location>
        <position position="88"/>
    </location>
</feature>
<feature type="modified residue" description="Phosphoserine" evidence="10 11">
    <location>
        <position position="94"/>
    </location>
</feature>
<feature type="modified residue" description="N6-acetyllysine; alternate" evidence="12">
    <location>
        <position position="100"/>
    </location>
</feature>
<feature type="modified residue" description="Phosphoserine" evidence="1">
    <location>
        <position position="132"/>
    </location>
</feature>
<feature type="modified residue" description="Phosphotyrosine" evidence="11">
    <location>
        <position position="141"/>
    </location>
</feature>
<feature type="modified residue" description="Phosphoserine" evidence="11">
    <location>
        <position position="143"/>
    </location>
</feature>
<feature type="modified residue" description="Phosphoserine" evidence="11">
    <location>
        <position position="145"/>
    </location>
</feature>
<feature type="modified residue" description="Phosphoserine" evidence="1">
    <location>
        <position position="167"/>
    </location>
</feature>
<feature type="modified residue" description="Phosphoserine" evidence="1">
    <location>
        <position position="240"/>
    </location>
</feature>
<feature type="modified residue" description="Phosphoserine" evidence="1">
    <location>
        <position position="242"/>
    </location>
</feature>
<feature type="modified residue" description="Phosphoserine" evidence="1">
    <location>
        <position position="258"/>
    </location>
</feature>
<feature type="modified residue" description="Phosphoserine" evidence="1">
    <location>
        <position position="278"/>
    </location>
</feature>
<feature type="modified residue" description="Phosphoserine" evidence="1">
    <location>
        <position position="292"/>
    </location>
</feature>
<feature type="modified residue" description="Phosphoserine" evidence="1">
    <location>
        <position position="294"/>
    </location>
</feature>
<feature type="modified residue" description="Phosphoserine" evidence="1">
    <location>
        <position position="328"/>
    </location>
</feature>
<feature type="modified residue" description="Phosphoserine" evidence="1">
    <location>
        <position position="354"/>
    </location>
</feature>
<feature type="modified residue" description="Phosphoserine" evidence="1">
    <location>
        <position position="356"/>
    </location>
</feature>
<feature type="modified residue" description="Phosphoserine" evidence="1">
    <location>
        <position position="366"/>
    </location>
</feature>
<feature type="modified residue" description="Phosphoserine" evidence="1">
    <location>
        <position position="368"/>
    </location>
</feature>
<feature type="modified residue" description="Phosphothreonine" evidence="1">
    <location>
        <position position="385"/>
    </location>
</feature>
<feature type="modified residue" description="Phosphoserine" evidence="1">
    <location>
        <position position="387"/>
    </location>
</feature>
<feature type="modified residue" description="Phosphoserine" evidence="1">
    <location>
        <position position="427"/>
    </location>
</feature>
<feature type="modified residue" description="Phosphoserine" evidence="10">
    <location>
        <position position="431"/>
    </location>
</feature>
<feature type="modified residue" description="Phosphoserine" evidence="10">
    <location>
        <position position="437"/>
    </location>
</feature>
<feature type="modified residue" description="Phosphoserine" evidence="1">
    <location>
        <position position="518"/>
    </location>
</feature>
<feature type="modified residue" description="Phosphoserine" evidence="1">
    <location>
        <position position="519"/>
    </location>
</feature>
<feature type="modified residue" description="Phosphoserine" evidence="1">
    <location>
        <position position="520"/>
    </location>
</feature>
<feature type="modified residue" description="Phosphoserine" evidence="1">
    <location>
        <position position="565"/>
    </location>
</feature>
<feature type="modified residue" description="Phosphoserine" evidence="1">
    <location>
        <position position="569"/>
    </location>
</feature>
<feature type="modified residue" description="Phosphoserine" evidence="8">
    <location>
        <position position="576"/>
    </location>
</feature>
<feature type="modified residue" description="Phosphoserine" evidence="11">
    <location>
        <position position="578"/>
    </location>
</feature>
<feature type="modified residue" description="Phosphoserine" evidence="11">
    <location>
        <position position="580"/>
    </location>
</feature>
<feature type="modified residue" description="N6-acetyllysine" evidence="1">
    <location>
        <position position="717"/>
    </location>
</feature>
<feature type="modified residue" description="Phosphotyrosine" evidence="9 10 11">
    <location>
        <position position="849"/>
    </location>
</feature>
<feature type="modified residue" description="Phosphoserine" evidence="2">
    <location>
        <position position="852"/>
    </location>
</feature>
<feature type="cross-link" description="Glycyl lysine isopeptide (Lys-Gly) (interchain with G-Cter in SUMO2); alternate" evidence="1">
    <location>
        <position position="100"/>
    </location>
</feature>
<feature type="cross-link" description="Glycyl lysine isopeptide (Lys-Gly) (interchain with G-Cter in SUMO2)" evidence="1">
    <location>
        <position position="112"/>
    </location>
</feature>
<feature type="cross-link" description="Glycyl lysine isopeptide (Lys-Gly) (interchain with G-Cter in SUMO1); alternate" evidence="1">
    <location>
        <position position="118"/>
    </location>
</feature>
<feature type="cross-link" description="Glycyl lysine isopeptide (Lys-Gly) (interchain with G-Cter in SUMO2); alternate" evidence="1">
    <location>
        <position position="118"/>
    </location>
</feature>
<feature type="cross-link" description="Glycyl lysine isopeptide (Lys-Gly) (interchain with G-Cter in SUMO2)" evidence="1">
    <location>
        <position position="171"/>
    </location>
</feature>
<feature type="cross-link" description="Glycyl lysine isopeptide (Lys-Gly) (interchain with G-Cter in SUMO2)" evidence="1">
    <location>
        <position position="178"/>
    </location>
</feature>
<feature type="cross-link" description="Glycyl lysine isopeptide (Lys-Gly) (interchain with G-Cter in SUMO2)" evidence="1">
    <location>
        <position position="593"/>
    </location>
</feature>
<feature type="cross-link" description="Glycyl lysine isopeptide (Lys-Gly) (interchain with G-Cter in SUMO2)" evidence="1">
    <location>
        <position position="659"/>
    </location>
</feature>
<feature type="sequence conflict" description="In Ref. 5; AAC32042." evidence="7" ref="5">
    <original>SKS</original>
    <variation>IPG</variation>
    <location>
        <begin position="185"/>
        <end position="187"/>
    </location>
</feature>
<feature type="sequence conflict" description="In Ref. 5; AAC32042." evidence="7" ref="5">
    <original>K</original>
    <variation>I</variation>
    <location>
        <position position="223"/>
    </location>
</feature>
<feature type="sequence conflict" description="In Ref. 1; AAM19102 and 5; AAC32042." evidence="7" ref="1 5">
    <original>R</original>
    <variation>K</variation>
    <location>
        <position position="478"/>
    </location>
</feature>
<feature type="sequence conflict" description="In Ref. 6; AAB03269." evidence="7" ref="6">
    <original>F</original>
    <variation>L</variation>
    <location>
        <position position="633"/>
    </location>
</feature>
<proteinExistence type="evidence at protein level"/>
<name>PRP4K_MOUSE</name>
<reference key="1">
    <citation type="journal article" date="2002" name="Mol. Cell. Biol.">
        <title>Mammalian PRP4 kinase copurifies and interacts with components of both the U5 snRNP and the N-CoR deacetylase complexes.</title>
        <authorList>
            <person name="Dellaire G."/>
            <person name="Makarov E.M."/>
            <person name="Cowger J.J.M."/>
            <person name="Longman D."/>
            <person name="Sutherland H.G.E."/>
            <person name="Luehrmann R."/>
            <person name="Torchia J."/>
            <person name="Bickmore W.A."/>
        </authorList>
    </citation>
    <scope>NUCLEOTIDE SEQUENCE [MRNA]</scope>
    <scope>SUBCELLULAR LOCATION</scope>
</reference>
<reference key="2">
    <citation type="journal article" date="2005" name="Science">
        <title>The transcriptional landscape of the mammalian genome.</title>
        <authorList>
            <person name="Carninci P."/>
            <person name="Kasukawa T."/>
            <person name="Katayama S."/>
            <person name="Gough J."/>
            <person name="Frith M.C."/>
            <person name="Maeda N."/>
            <person name="Oyama R."/>
            <person name="Ravasi T."/>
            <person name="Lenhard B."/>
            <person name="Wells C."/>
            <person name="Kodzius R."/>
            <person name="Shimokawa K."/>
            <person name="Bajic V.B."/>
            <person name="Brenner S.E."/>
            <person name="Batalov S."/>
            <person name="Forrest A.R."/>
            <person name="Zavolan M."/>
            <person name="Davis M.J."/>
            <person name="Wilming L.G."/>
            <person name="Aidinis V."/>
            <person name="Allen J.E."/>
            <person name="Ambesi-Impiombato A."/>
            <person name="Apweiler R."/>
            <person name="Aturaliya R.N."/>
            <person name="Bailey T.L."/>
            <person name="Bansal M."/>
            <person name="Baxter L."/>
            <person name="Beisel K.W."/>
            <person name="Bersano T."/>
            <person name="Bono H."/>
            <person name="Chalk A.M."/>
            <person name="Chiu K.P."/>
            <person name="Choudhary V."/>
            <person name="Christoffels A."/>
            <person name="Clutterbuck D.R."/>
            <person name="Crowe M.L."/>
            <person name="Dalla E."/>
            <person name="Dalrymple B.P."/>
            <person name="de Bono B."/>
            <person name="Della Gatta G."/>
            <person name="di Bernardo D."/>
            <person name="Down T."/>
            <person name="Engstrom P."/>
            <person name="Fagiolini M."/>
            <person name="Faulkner G."/>
            <person name="Fletcher C.F."/>
            <person name="Fukushima T."/>
            <person name="Furuno M."/>
            <person name="Futaki S."/>
            <person name="Gariboldi M."/>
            <person name="Georgii-Hemming P."/>
            <person name="Gingeras T.R."/>
            <person name="Gojobori T."/>
            <person name="Green R.E."/>
            <person name="Gustincich S."/>
            <person name="Harbers M."/>
            <person name="Hayashi Y."/>
            <person name="Hensch T.K."/>
            <person name="Hirokawa N."/>
            <person name="Hill D."/>
            <person name="Huminiecki L."/>
            <person name="Iacono M."/>
            <person name="Ikeo K."/>
            <person name="Iwama A."/>
            <person name="Ishikawa T."/>
            <person name="Jakt M."/>
            <person name="Kanapin A."/>
            <person name="Katoh M."/>
            <person name="Kawasawa Y."/>
            <person name="Kelso J."/>
            <person name="Kitamura H."/>
            <person name="Kitano H."/>
            <person name="Kollias G."/>
            <person name="Krishnan S.P."/>
            <person name="Kruger A."/>
            <person name="Kummerfeld S.K."/>
            <person name="Kurochkin I.V."/>
            <person name="Lareau L.F."/>
            <person name="Lazarevic D."/>
            <person name="Lipovich L."/>
            <person name="Liu J."/>
            <person name="Liuni S."/>
            <person name="McWilliam S."/>
            <person name="Madan Babu M."/>
            <person name="Madera M."/>
            <person name="Marchionni L."/>
            <person name="Matsuda H."/>
            <person name="Matsuzawa S."/>
            <person name="Miki H."/>
            <person name="Mignone F."/>
            <person name="Miyake S."/>
            <person name="Morris K."/>
            <person name="Mottagui-Tabar S."/>
            <person name="Mulder N."/>
            <person name="Nakano N."/>
            <person name="Nakauchi H."/>
            <person name="Ng P."/>
            <person name="Nilsson R."/>
            <person name="Nishiguchi S."/>
            <person name="Nishikawa S."/>
            <person name="Nori F."/>
            <person name="Ohara O."/>
            <person name="Okazaki Y."/>
            <person name="Orlando V."/>
            <person name="Pang K.C."/>
            <person name="Pavan W.J."/>
            <person name="Pavesi G."/>
            <person name="Pesole G."/>
            <person name="Petrovsky N."/>
            <person name="Piazza S."/>
            <person name="Reed J."/>
            <person name="Reid J.F."/>
            <person name="Ring B.Z."/>
            <person name="Ringwald M."/>
            <person name="Rost B."/>
            <person name="Ruan Y."/>
            <person name="Salzberg S.L."/>
            <person name="Sandelin A."/>
            <person name="Schneider C."/>
            <person name="Schoenbach C."/>
            <person name="Sekiguchi K."/>
            <person name="Semple C.A."/>
            <person name="Seno S."/>
            <person name="Sessa L."/>
            <person name="Sheng Y."/>
            <person name="Shibata Y."/>
            <person name="Shimada H."/>
            <person name="Shimada K."/>
            <person name="Silva D."/>
            <person name="Sinclair B."/>
            <person name="Sperling S."/>
            <person name="Stupka E."/>
            <person name="Sugiura K."/>
            <person name="Sultana R."/>
            <person name="Takenaka Y."/>
            <person name="Taki K."/>
            <person name="Tammoja K."/>
            <person name="Tan S.L."/>
            <person name="Tang S."/>
            <person name="Taylor M.S."/>
            <person name="Tegner J."/>
            <person name="Teichmann S.A."/>
            <person name="Ueda H.R."/>
            <person name="van Nimwegen E."/>
            <person name="Verardo R."/>
            <person name="Wei C.L."/>
            <person name="Yagi K."/>
            <person name="Yamanishi H."/>
            <person name="Zabarovsky E."/>
            <person name="Zhu S."/>
            <person name="Zimmer A."/>
            <person name="Hide W."/>
            <person name="Bult C."/>
            <person name="Grimmond S.M."/>
            <person name="Teasdale R.D."/>
            <person name="Liu E.T."/>
            <person name="Brusic V."/>
            <person name="Quackenbush J."/>
            <person name="Wahlestedt C."/>
            <person name="Mattick J.S."/>
            <person name="Hume D.A."/>
            <person name="Kai C."/>
            <person name="Sasaki D."/>
            <person name="Tomaru Y."/>
            <person name="Fukuda S."/>
            <person name="Kanamori-Katayama M."/>
            <person name="Suzuki M."/>
            <person name="Aoki J."/>
            <person name="Arakawa T."/>
            <person name="Iida J."/>
            <person name="Imamura K."/>
            <person name="Itoh M."/>
            <person name="Kato T."/>
            <person name="Kawaji H."/>
            <person name="Kawagashira N."/>
            <person name="Kawashima T."/>
            <person name="Kojima M."/>
            <person name="Kondo S."/>
            <person name="Konno H."/>
            <person name="Nakano K."/>
            <person name="Ninomiya N."/>
            <person name="Nishio T."/>
            <person name="Okada M."/>
            <person name="Plessy C."/>
            <person name="Shibata K."/>
            <person name="Shiraki T."/>
            <person name="Suzuki S."/>
            <person name="Tagami M."/>
            <person name="Waki K."/>
            <person name="Watahiki A."/>
            <person name="Okamura-Oho Y."/>
            <person name="Suzuki H."/>
            <person name="Kawai J."/>
            <person name="Hayashizaki Y."/>
        </authorList>
    </citation>
    <scope>NUCLEOTIDE SEQUENCE [LARGE SCALE MRNA]</scope>
    <source>
        <strain>C57BL/6J</strain>
        <tissue>Hippocampus</tissue>
        <tissue>Spinal ganglion</tissue>
        <tissue>Urinary bladder</tissue>
    </source>
</reference>
<reference key="3">
    <citation type="submission" date="2005-07" db="EMBL/GenBank/DDBJ databases">
        <authorList>
            <person name="Mural R.J."/>
            <person name="Adams M.D."/>
            <person name="Myers E.W."/>
            <person name="Smith H.O."/>
            <person name="Venter J.C."/>
        </authorList>
    </citation>
    <scope>NUCLEOTIDE SEQUENCE [LARGE SCALE GENOMIC DNA]</scope>
</reference>
<reference key="4">
    <citation type="journal article" date="2004" name="Genome Res.">
        <title>The status, quality, and expansion of the NIH full-length cDNA project: the Mammalian Gene Collection (MGC).</title>
        <authorList>
            <consortium name="The MGC Project Team"/>
        </authorList>
    </citation>
    <scope>NUCLEOTIDE SEQUENCE [LARGE SCALE MRNA]</scope>
    <source>
        <tissue>Brain</tissue>
    </source>
</reference>
<reference key="5">
    <citation type="journal article" date="1998" name="J. Cell Sci.">
        <title>Capturing novel mouse genes encoding chromosomal and other nuclear proteins.</title>
        <authorList>
            <person name="Tate P."/>
            <person name="Lee M."/>
            <person name="Tweedie S."/>
            <person name="Skarnes W.C."/>
            <person name="Bickmore W.A."/>
        </authorList>
    </citation>
    <scope>NUCLEOTIDE SEQUENCE [MRNA] OF 185-1007</scope>
</reference>
<reference key="6">
    <citation type="journal article" date="1997" name="Nucleic Acids Res.">
        <title>Functional analysis of the fission yeast Prp4 protein kinase involved in pre-mRNA splicing and isolation of a putative mammalian homologue.</title>
        <authorList>
            <person name="Gross T."/>
            <person name="Lutzelberger M."/>
            <person name="Wiegmann H."/>
            <person name="Klingenhoff A."/>
            <person name="Shenoy S."/>
            <person name="Kaeufer N.F."/>
        </authorList>
    </citation>
    <scope>NUCLEOTIDE SEQUENCE [MRNA] OF 512-1007</scope>
</reference>
<reference key="7">
    <citation type="journal article" date="2005" name="Nat. Biotechnol.">
        <title>Immunoaffinity profiling of tyrosine phosphorylation in cancer cells.</title>
        <authorList>
            <person name="Rush J."/>
            <person name="Moritz A."/>
            <person name="Lee K.A."/>
            <person name="Guo A."/>
            <person name="Goss V.L."/>
            <person name="Spek E.J."/>
            <person name="Zhang H."/>
            <person name="Zha X.-M."/>
            <person name="Polakiewicz R.D."/>
            <person name="Comb M.J."/>
        </authorList>
    </citation>
    <scope>IDENTIFICATION BY MASS SPECTROMETRY [LARGE SCALE ANALYSIS]</scope>
</reference>
<reference key="8">
    <citation type="journal article" date="2007" name="J. Immunol.">
        <title>Quantitative time-resolved phosphoproteomic analysis of mast cell signaling.</title>
        <authorList>
            <person name="Cao L."/>
            <person name="Yu K."/>
            <person name="Banh C."/>
            <person name="Nguyen V."/>
            <person name="Ritz A."/>
            <person name="Raphael B.J."/>
            <person name="Kawakami Y."/>
            <person name="Kawakami T."/>
            <person name="Salomon A.R."/>
        </authorList>
    </citation>
    <scope>PHOSPHORYLATION [LARGE SCALE ANALYSIS] AT TYR-849</scope>
    <scope>IDENTIFICATION BY MASS SPECTROMETRY [LARGE SCALE ANALYSIS]</scope>
    <source>
        <tissue>Mast cell</tissue>
    </source>
</reference>
<reference key="9">
    <citation type="journal article" date="2007" name="Proc. Natl. Acad. Sci. U.S.A.">
        <title>Large-scale phosphorylation analysis of mouse liver.</title>
        <authorList>
            <person name="Villen J."/>
            <person name="Beausoleil S.A."/>
            <person name="Gerber S.A."/>
            <person name="Gygi S.P."/>
        </authorList>
    </citation>
    <scope>PHOSPHORYLATION [LARGE SCALE ANALYSIS] AT SER-576</scope>
    <scope>IDENTIFICATION BY MASS SPECTROMETRY [LARGE SCALE ANALYSIS]</scope>
    <source>
        <tissue>Liver</tissue>
    </source>
</reference>
<reference key="10">
    <citation type="journal article" date="2008" name="J. Proteome Res.">
        <title>Large-scale identification and evolution indexing of tyrosine phosphorylation sites from murine brain.</title>
        <authorList>
            <person name="Ballif B.A."/>
            <person name="Carey G.R."/>
            <person name="Sunyaev S.R."/>
            <person name="Gygi S.P."/>
        </authorList>
    </citation>
    <scope>IDENTIFICATION BY MASS SPECTROMETRY [LARGE SCALE ANALYSIS]</scope>
    <source>
        <tissue>Brain</tissue>
    </source>
</reference>
<reference key="11">
    <citation type="journal article" date="2009" name="Mol. Cell. Proteomics">
        <title>Large scale localization of protein phosphorylation by use of electron capture dissociation mass spectrometry.</title>
        <authorList>
            <person name="Sweet S.M."/>
            <person name="Bailey C.M."/>
            <person name="Cunningham D.L."/>
            <person name="Heath J.K."/>
            <person name="Cooper H.J."/>
        </authorList>
    </citation>
    <scope>PHOSPHORYLATION [LARGE SCALE ANALYSIS] AT SER-88; SER-94; SER-431; SER-437 AND TYR-849</scope>
    <scope>IDENTIFICATION BY MASS SPECTROMETRY [LARGE SCALE ANALYSIS]</scope>
    <source>
        <tissue>Embryonic fibroblast</tissue>
    </source>
</reference>
<reference key="12">
    <citation type="journal article" date="2010" name="Cell">
        <title>A tissue-specific atlas of mouse protein phosphorylation and expression.</title>
        <authorList>
            <person name="Huttlin E.L."/>
            <person name="Jedrychowski M.P."/>
            <person name="Elias J.E."/>
            <person name="Goswami T."/>
            <person name="Rad R."/>
            <person name="Beausoleil S.A."/>
            <person name="Villen J."/>
            <person name="Haas W."/>
            <person name="Sowa M.E."/>
            <person name="Gygi S.P."/>
        </authorList>
    </citation>
    <scope>PHOSPHORYLATION [LARGE SCALE ANALYSIS] AT SER-21; SER-24; SER-33; SER-88; SER-94; TYR-141; SER-143; SER-145; SER-578; SER-580 AND TYR-849</scope>
    <scope>IDENTIFICATION BY MASS SPECTROMETRY [LARGE SCALE ANALYSIS]</scope>
    <source>
        <tissue>Brain</tissue>
        <tissue>Brown adipose tissue</tissue>
        <tissue>Heart</tissue>
        <tissue>Kidney</tissue>
        <tissue>Liver</tissue>
        <tissue>Lung</tissue>
        <tissue>Pancreas</tissue>
        <tissue>Spleen</tissue>
        <tissue>Testis</tissue>
    </source>
</reference>
<reference key="13">
    <citation type="journal article" date="2013" name="Mol. Cell">
        <title>SIRT5-mediated lysine desuccinylation impacts diverse metabolic pathways.</title>
        <authorList>
            <person name="Park J."/>
            <person name="Chen Y."/>
            <person name="Tishkoff D.X."/>
            <person name="Peng C."/>
            <person name="Tan M."/>
            <person name="Dai L."/>
            <person name="Xie Z."/>
            <person name="Zhang Y."/>
            <person name="Zwaans B.M."/>
            <person name="Skinner M.E."/>
            <person name="Lombard D.B."/>
            <person name="Zhao Y."/>
        </authorList>
    </citation>
    <scope>ACETYLATION [LARGE SCALE ANALYSIS] AT LYS-100</scope>
    <scope>IDENTIFICATION BY MASS SPECTROMETRY [LARGE SCALE ANALYSIS]</scope>
    <source>
        <tissue>Embryonic fibroblast</tissue>
    </source>
</reference>
<evidence type="ECO:0000250" key="1">
    <source>
        <dbReference type="UniProtKB" id="Q13523"/>
    </source>
</evidence>
<evidence type="ECO:0000250" key="2">
    <source>
        <dbReference type="UniProtKB" id="Q5RKH1"/>
    </source>
</evidence>
<evidence type="ECO:0000255" key="3">
    <source>
        <dbReference type="PROSITE-ProRule" id="PRU00159"/>
    </source>
</evidence>
<evidence type="ECO:0000255" key="4">
    <source>
        <dbReference type="PROSITE-ProRule" id="PRU10027"/>
    </source>
</evidence>
<evidence type="ECO:0000256" key="5">
    <source>
        <dbReference type="SAM" id="MobiDB-lite"/>
    </source>
</evidence>
<evidence type="ECO:0000269" key="6">
    <source>
    </source>
</evidence>
<evidence type="ECO:0000305" key="7"/>
<evidence type="ECO:0007744" key="8">
    <source>
    </source>
</evidence>
<evidence type="ECO:0007744" key="9">
    <source>
    </source>
</evidence>
<evidence type="ECO:0007744" key="10">
    <source>
    </source>
</evidence>
<evidence type="ECO:0007744" key="11">
    <source>
    </source>
</evidence>
<evidence type="ECO:0007744" key="12">
    <source>
    </source>
</evidence>
<protein>
    <recommendedName>
        <fullName>Serine/threonine-protein kinase PRP4 homolog</fullName>
        <ecNumber>2.7.11.1</ecNumber>
    </recommendedName>
    <alternativeName>
        <fullName>PRP4 pre-mRNA-processing factor 4 homolog</fullName>
    </alternativeName>
    <alternativeName>
        <fullName>Pre-mRNA protein kinase</fullName>
    </alternativeName>
</protein>